<reference key="1">
    <citation type="journal article" date="2005" name="Mol. Biol. Evol.">
        <title>The chloroplast genome sequence of the green alga Pseudendoclonium akinetum (Ulvophyceae) reveals unusual structural features and new insights into the branching order of chlorophyte lineages.</title>
        <authorList>
            <person name="Pombert J.-F."/>
            <person name="Otis C."/>
            <person name="Lemieux C."/>
            <person name="Turmel M."/>
        </authorList>
    </citation>
    <scope>NUCLEOTIDE SEQUENCE [LARGE SCALE GENOMIC DNA]</scope>
    <source>
        <strain>UTEX 1912</strain>
    </source>
</reference>
<accession>Q3ZJ10</accession>
<gene>
    <name evidence="1" type="primary">petB</name>
</gene>
<dbReference type="EMBL" id="AY835431">
    <property type="protein sequence ID" value="AAV80679.1"/>
    <property type="molecule type" value="Genomic_DNA"/>
</dbReference>
<dbReference type="RefSeq" id="YP_636257.1">
    <property type="nucleotide sequence ID" value="NC_008114.1"/>
</dbReference>
<dbReference type="SMR" id="Q3ZJ10"/>
<dbReference type="GeneID" id="4108752"/>
<dbReference type="GO" id="GO:0009535">
    <property type="term" value="C:chloroplast thylakoid membrane"/>
    <property type="evidence" value="ECO:0007669"/>
    <property type="project" value="UniProtKB-SubCell"/>
</dbReference>
<dbReference type="GO" id="GO:0045158">
    <property type="term" value="F:electron transporter, transferring electrons within cytochrome b6/f complex of photosystem II activity"/>
    <property type="evidence" value="ECO:0007669"/>
    <property type="project" value="UniProtKB-UniRule"/>
</dbReference>
<dbReference type="GO" id="GO:0046872">
    <property type="term" value="F:metal ion binding"/>
    <property type="evidence" value="ECO:0007669"/>
    <property type="project" value="UniProtKB-KW"/>
</dbReference>
<dbReference type="GO" id="GO:0016491">
    <property type="term" value="F:oxidoreductase activity"/>
    <property type="evidence" value="ECO:0007669"/>
    <property type="project" value="InterPro"/>
</dbReference>
<dbReference type="GO" id="GO:0015979">
    <property type="term" value="P:photosynthesis"/>
    <property type="evidence" value="ECO:0007669"/>
    <property type="project" value="UniProtKB-UniRule"/>
</dbReference>
<dbReference type="GO" id="GO:0022904">
    <property type="term" value="P:respiratory electron transport chain"/>
    <property type="evidence" value="ECO:0007669"/>
    <property type="project" value="InterPro"/>
</dbReference>
<dbReference type="CDD" id="cd00284">
    <property type="entry name" value="Cytochrome_b_N"/>
    <property type="match status" value="1"/>
</dbReference>
<dbReference type="FunFam" id="1.20.810.10:FF:000001">
    <property type="entry name" value="Cytochrome b6"/>
    <property type="match status" value="1"/>
</dbReference>
<dbReference type="Gene3D" id="1.20.810.10">
    <property type="entry name" value="Cytochrome Bc1 Complex, Chain C"/>
    <property type="match status" value="1"/>
</dbReference>
<dbReference type="HAMAP" id="MF_00633">
    <property type="entry name" value="Cytb6_f_cytb6"/>
    <property type="match status" value="1"/>
</dbReference>
<dbReference type="InterPro" id="IPR005797">
    <property type="entry name" value="Cyt_b/b6_N"/>
</dbReference>
<dbReference type="InterPro" id="IPR023530">
    <property type="entry name" value="Cyt_B6_PetB"/>
</dbReference>
<dbReference type="InterPro" id="IPR027387">
    <property type="entry name" value="Cytb/b6-like_sf"/>
</dbReference>
<dbReference type="InterPro" id="IPR048259">
    <property type="entry name" value="Cytochrome_b_N_euk/bac"/>
</dbReference>
<dbReference type="InterPro" id="IPR016174">
    <property type="entry name" value="Di-haem_cyt_TM"/>
</dbReference>
<dbReference type="NCBIfam" id="NF002990">
    <property type="entry name" value="PRK03735.1"/>
    <property type="match status" value="1"/>
</dbReference>
<dbReference type="PANTHER" id="PTHR19271">
    <property type="entry name" value="CYTOCHROME B"/>
    <property type="match status" value="1"/>
</dbReference>
<dbReference type="PANTHER" id="PTHR19271:SF16">
    <property type="entry name" value="CYTOCHROME B"/>
    <property type="match status" value="1"/>
</dbReference>
<dbReference type="Pfam" id="PF00033">
    <property type="entry name" value="Cytochrome_B"/>
    <property type="match status" value="1"/>
</dbReference>
<dbReference type="PIRSF" id="PIRSF000032">
    <property type="entry name" value="Cytochrome_b6"/>
    <property type="match status" value="1"/>
</dbReference>
<dbReference type="SUPFAM" id="SSF81342">
    <property type="entry name" value="Transmembrane di-heme cytochromes"/>
    <property type="match status" value="1"/>
</dbReference>
<dbReference type="PROSITE" id="PS51002">
    <property type="entry name" value="CYTB_NTER"/>
    <property type="match status" value="1"/>
</dbReference>
<comment type="function">
    <text evidence="1">Component of the cytochrome b6-f complex, which mediates electron transfer between photosystem II (PSII) and photosystem I (PSI), cyclic electron flow around PSI, and state transitions.</text>
</comment>
<comment type="cofactor">
    <cofactor evidence="1">
        <name>heme b</name>
        <dbReference type="ChEBI" id="CHEBI:60344"/>
    </cofactor>
    <text evidence="1">Binds 2 heme b groups non-covalently with two histidine residues as axial ligands.</text>
</comment>
<comment type="cofactor">
    <cofactor evidence="1">
        <name>heme c</name>
        <dbReference type="ChEBI" id="CHEBI:61717"/>
    </cofactor>
    <text evidence="1">Binds one heme group covalently by a single cysteine link with no axial amino acid ligand. This heme was named heme ci.</text>
</comment>
<comment type="subunit">
    <text evidence="1">The 4 large subunits of the cytochrome b6-f complex are cytochrome b6, subunit IV (17 kDa polypeptide, PetD), cytochrome f and the Rieske protein, while the 4 small subunits are PetG, PetL, PetM and PetN. The complex functions as a dimer.</text>
</comment>
<comment type="subcellular location">
    <subcellularLocation>
        <location evidence="1">Plastid</location>
        <location evidence="1">Chloroplast thylakoid membrane</location>
        <topology evidence="1">Multi-pass membrane protein</topology>
    </subcellularLocation>
</comment>
<comment type="miscellaneous">
    <text evidence="1">Heme 1 (or BH or b566) is high-potential and absorbs at about 566 nm, and heme 2 (or BL or b562) is low-potential and absorbs at about 562 nm.</text>
</comment>
<comment type="similarity">
    <text evidence="1">Belongs to the cytochrome b family. PetB subfamily.</text>
</comment>
<geneLocation type="chloroplast"/>
<feature type="chain" id="PRO_0000275332" description="Cytochrome b6">
    <location>
        <begin position="1"/>
        <end position="215"/>
    </location>
</feature>
<feature type="transmembrane region" description="Helical" evidence="1">
    <location>
        <begin position="32"/>
        <end position="52"/>
    </location>
</feature>
<feature type="transmembrane region" description="Helical" evidence="1">
    <location>
        <begin position="90"/>
        <end position="110"/>
    </location>
</feature>
<feature type="transmembrane region" description="Helical" evidence="1">
    <location>
        <begin position="116"/>
        <end position="136"/>
    </location>
</feature>
<feature type="transmembrane region" description="Helical" evidence="1">
    <location>
        <begin position="186"/>
        <end position="206"/>
    </location>
</feature>
<feature type="binding site" description="covalent" evidence="1">
    <location>
        <position position="35"/>
    </location>
    <ligand>
        <name>heme c</name>
        <dbReference type="ChEBI" id="CHEBI:61717"/>
    </ligand>
</feature>
<feature type="binding site" description="axial binding residue" evidence="1">
    <location>
        <position position="86"/>
    </location>
    <ligand>
        <name>heme b</name>
        <dbReference type="ChEBI" id="CHEBI:60344"/>
        <label>2</label>
    </ligand>
    <ligandPart>
        <name>Fe</name>
        <dbReference type="ChEBI" id="CHEBI:18248"/>
    </ligandPart>
</feature>
<feature type="binding site" description="axial binding residue" evidence="1">
    <location>
        <position position="100"/>
    </location>
    <ligand>
        <name>heme b</name>
        <dbReference type="ChEBI" id="CHEBI:60344"/>
        <label>1</label>
    </ligand>
    <ligandPart>
        <name>Fe</name>
        <dbReference type="ChEBI" id="CHEBI:18248"/>
    </ligandPart>
</feature>
<feature type="binding site" description="axial binding residue" evidence="1">
    <location>
        <position position="187"/>
    </location>
    <ligand>
        <name>heme b</name>
        <dbReference type="ChEBI" id="CHEBI:60344"/>
        <label>2</label>
    </ligand>
    <ligandPart>
        <name>Fe</name>
        <dbReference type="ChEBI" id="CHEBI:18248"/>
    </ligandPart>
</feature>
<feature type="binding site" description="axial binding residue" evidence="1">
    <location>
        <position position="202"/>
    </location>
    <ligand>
        <name>heme b</name>
        <dbReference type="ChEBI" id="CHEBI:60344"/>
        <label>1</label>
    </ligand>
    <ligandPart>
        <name>Fe</name>
        <dbReference type="ChEBI" id="CHEBI:18248"/>
    </ligandPart>
</feature>
<proteinExistence type="inferred from homology"/>
<evidence type="ECO:0000255" key="1">
    <source>
        <dbReference type="HAMAP-Rule" id="MF_00633"/>
    </source>
</evidence>
<name>CYB6_TUPAK</name>
<organism>
    <name type="scientific">Tupiella akineta</name>
    <name type="common">Green alga</name>
    <name type="synonym">Pseudendoclonium akinetum</name>
    <dbReference type="NCBI Taxonomy" id="160070"/>
    <lineage>
        <taxon>Eukaryota</taxon>
        <taxon>Viridiplantae</taxon>
        <taxon>Chlorophyta</taxon>
        <taxon>Ulvophyceae</taxon>
        <taxon>OUU clade</taxon>
        <taxon>Ulotrichales</taxon>
        <taxon>Tupiellaceae</taxon>
        <taxon>Tupiella</taxon>
    </lineage>
</organism>
<keyword id="KW-0150">Chloroplast</keyword>
<keyword id="KW-0249">Electron transport</keyword>
<keyword id="KW-0349">Heme</keyword>
<keyword id="KW-0408">Iron</keyword>
<keyword id="KW-0472">Membrane</keyword>
<keyword id="KW-0479">Metal-binding</keyword>
<keyword id="KW-0602">Photosynthesis</keyword>
<keyword id="KW-0934">Plastid</keyword>
<keyword id="KW-0793">Thylakoid</keyword>
<keyword id="KW-0812">Transmembrane</keyword>
<keyword id="KW-1133">Transmembrane helix</keyword>
<keyword id="KW-0813">Transport</keyword>
<sequence length="215" mass="24090">MSKIYDWFEERLEIQAIADDISSKYVPPHVNIFYCLGGITFTLFLVQVATGFAMTFYYRPTVAEAFASVNYLMTDVNFGWLIRSIHRWSASMMVLSMILHVCRVYLTGGFKRPRELTWITGVIMAVCTVSFGVTGYSLPWDQVGYWAVKIVTGVPDAIPVVGPAIVELLRGGVGVGQSTLTRFYSLHTFVLPLLTVVFMLAHFLMIRKQGISGPL</sequence>
<protein>
    <recommendedName>
        <fullName evidence="1">Cytochrome b6</fullName>
    </recommendedName>
</protein>